<evidence type="ECO:0000255" key="1">
    <source>
        <dbReference type="HAMAP-Rule" id="MF_00500"/>
    </source>
</evidence>
<evidence type="ECO:0000256" key="2">
    <source>
        <dbReference type="SAM" id="MobiDB-lite"/>
    </source>
</evidence>
<evidence type="ECO:0000305" key="3"/>
<dbReference type="EMBL" id="AM286690">
    <property type="protein sequence ID" value="CAL15904.1"/>
    <property type="molecule type" value="Genomic_DNA"/>
</dbReference>
<dbReference type="RefSeq" id="WP_011587742.1">
    <property type="nucleotide sequence ID" value="NC_008260.1"/>
</dbReference>
<dbReference type="SMR" id="Q0VSE4"/>
<dbReference type="STRING" id="393595.ABO_0456"/>
<dbReference type="KEGG" id="abo:ABO_0456"/>
<dbReference type="eggNOG" id="COG0268">
    <property type="taxonomic scope" value="Bacteria"/>
</dbReference>
<dbReference type="HOGENOM" id="CLU_160655_4_0_6"/>
<dbReference type="OrthoDB" id="9807974at2"/>
<dbReference type="Proteomes" id="UP000008871">
    <property type="component" value="Chromosome"/>
</dbReference>
<dbReference type="GO" id="GO:0005829">
    <property type="term" value="C:cytosol"/>
    <property type="evidence" value="ECO:0007669"/>
    <property type="project" value="TreeGrafter"/>
</dbReference>
<dbReference type="GO" id="GO:0015935">
    <property type="term" value="C:small ribosomal subunit"/>
    <property type="evidence" value="ECO:0007669"/>
    <property type="project" value="TreeGrafter"/>
</dbReference>
<dbReference type="GO" id="GO:0070181">
    <property type="term" value="F:small ribosomal subunit rRNA binding"/>
    <property type="evidence" value="ECO:0007669"/>
    <property type="project" value="TreeGrafter"/>
</dbReference>
<dbReference type="GO" id="GO:0003735">
    <property type="term" value="F:structural constituent of ribosome"/>
    <property type="evidence" value="ECO:0007669"/>
    <property type="project" value="InterPro"/>
</dbReference>
<dbReference type="GO" id="GO:0006412">
    <property type="term" value="P:translation"/>
    <property type="evidence" value="ECO:0007669"/>
    <property type="project" value="UniProtKB-UniRule"/>
</dbReference>
<dbReference type="FunFam" id="1.20.58.110:FF:000001">
    <property type="entry name" value="30S ribosomal protein S20"/>
    <property type="match status" value="1"/>
</dbReference>
<dbReference type="Gene3D" id="1.20.58.110">
    <property type="entry name" value="Ribosomal protein S20"/>
    <property type="match status" value="1"/>
</dbReference>
<dbReference type="HAMAP" id="MF_00500">
    <property type="entry name" value="Ribosomal_bS20"/>
    <property type="match status" value="1"/>
</dbReference>
<dbReference type="InterPro" id="IPR002583">
    <property type="entry name" value="Ribosomal_bS20"/>
</dbReference>
<dbReference type="InterPro" id="IPR036510">
    <property type="entry name" value="Ribosomal_bS20_sf"/>
</dbReference>
<dbReference type="NCBIfam" id="TIGR00029">
    <property type="entry name" value="S20"/>
    <property type="match status" value="1"/>
</dbReference>
<dbReference type="PANTHER" id="PTHR33398">
    <property type="entry name" value="30S RIBOSOMAL PROTEIN S20"/>
    <property type="match status" value="1"/>
</dbReference>
<dbReference type="PANTHER" id="PTHR33398:SF1">
    <property type="entry name" value="SMALL RIBOSOMAL SUBUNIT PROTEIN BS20C"/>
    <property type="match status" value="1"/>
</dbReference>
<dbReference type="Pfam" id="PF01649">
    <property type="entry name" value="Ribosomal_S20p"/>
    <property type="match status" value="1"/>
</dbReference>
<dbReference type="SUPFAM" id="SSF46992">
    <property type="entry name" value="Ribosomal protein S20"/>
    <property type="match status" value="1"/>
</dbReference>
<gene>
    <name evidence="1" type="primary">rpsT</name>
    <name type="ordered locus">ABO_0456</name>
</gene>
<comment type="function">
    <text evidence="1">Binds directly to 16S ribosomal RNA.</text>
</comment>
<comment type="similarity">
    <text evidence="1">Belongs to the bacterial ribosomal protein bS20 family.</text>
</comment>
<name>RS20_ALCBS</name>
<feature type="chain" id="PRO_0000260105" description="Small ribosomal subunit protein bS20">
    <location>
        <begin position="1"/>
        <end position="88"/>
    </location>
</feature>
<feature type="region of interest" description="Disordered" evidence="2">
    <location>
        <begin position="1"/>
        <end position="23"/>
    </location>
</feature>
<feature type="region of interest" description="Disordered" evidence="2">
    <location>
        <begin position="69"/>
        <end position="88"/>
    </location>
</feature>
<feature type="compositionally biased region" description="Basic residues" evidence="2">
    <location>
        <begin position="69"/>
        <end position="81"/>
    </location>
</feature>
<sequence length="88" mass="9760">MANSPQARKRARQAENRRQHNAAMRSMVRTYLKKVNAAIASGDQGSAQEAYNQAVSVLDKATRKGKFHPNKAARHKSRLNTKIKAMAA</sequence>
<protein>
    <recommendedName>
        <fullName evidence="1">Small ribosomal subunit protein bS20</fullName>
    </recommendedName>
    <alternativeName>
        <fullName evidence="3">30S ribosomal protein S20</fullName>
    </alternativeName>
</protein>
<accession>Q0VSE4</accession>
<reference key="1">
    <citation type="journal article" date="2006" name="Nat. Biotechnol.">
        <title>Genome sequence of the ubiquitous hydrocarbon-degrading marine bacterium Alcanivorax borkumensis.</title>
        <authorList>
            <person name="Schneiker S."/>
            <person name="Martins dos Santos V.A.P."/>
            <person name="Bartels D."/>
            <person name="Bekel T."/>
            <person name="Brecht M."/>
            <person name="Buhrmester J."/>
            <person name="Chernikova T.N."/>
            <person name="Denaro R."/>
            <person name="Ferrer M."/>
            <person name="Gertler C."/>
            <person name="Goesmann A."/>
            <person name="Golyshina O.V."/>
            <person name="Kaminski F."/>
            <person name="Khachane A.N."/>
            <person name="Lang S."/>
            <person name="Linke B."/>
            <person name="McHardy A.C."/>
            <person name="Meyer F."/>
            <person name="Nechitaylo T."/>
            <person name="Puehler A."/>
            <person name="Regenhardt D."/>
            <person name="Rupp O."/>
            <person name="Sabirova J.S."/>
            <person name="Selbitschka W."/>
            <person name="Yakimov M.M."/>
            <person name="Timmis K.N."/>
            <person name="Vorhoelter F.-J."/>
            <person name="Weidner S."/>
            <person name="Kaiser O."/>
            <person name="Golyshin P.N."/>
        </authorList>
    </citation>
    <scope>NUCLEOTIDE SEQUENCE [LARGE SCALE GENOMIC DNA]</scope>
    <source>
        <strain>ATCC 700651 / DSM 11573 / NCIMB 13689 / SK2</strain>
    </source>
</reference>
<organism>
    <name type="scientific">Alcanivorax borkumensis (strain ATCC 700651 / DSM 11573 / NCIMB 13689 / SK2)</name>
    <dbReference type="NCBI Taxonomy" id="393595"/>
    <lineage>
        <taxon>Bacteria</taxon>
        <taxon>Pseudomonadati</taxon>
        <taxon>Pseudomonadota</taxon>
        <taxon>Gammaproteobacteria</taxon>
        <taxon>Oceanospirillales</taxon>
        <taxon>Alcanivoracaceae</taxon>
        <taxon>Alcanivorax</taxon>
    </lineage>
</organism>
<keyword id="KW-1185">Reference proteome</keyword>
<keyword id="KW-0687">Ribonucleoprotein</keyword>
<keyword id="KW-0689">Ribosomal protein</keyword>
<keyword id="KW-0694">RNA-binding</keyword>
<keyword id="KW-0699">rRNA-binding</keyword>
<proteinExistence type="inferred from homology"/>